<organism>
    <name type="scientific">Vibrio cholerae serotype O1 (strain M66-2)</name>
    <dbReference type="NCBI Taxonomy" id="579112"/>
    <lineage>
        <taxon>Bacteria</taxon>
        <taxon>Pseudomonadati</taxon>
        <taxon>Pseudomonadota</taxon>
        <taxon>Gammaproteobacteria</taxon>
        <taxon>Vibrionales</taxon>
        <taxon>Vibrionaceae</taxon>
        <taxon>Vibrio</taxon>
    </lineage>
</organism>
<keyword id="KW-0963">Cytoplasm</keyword>
<keyword id="KW-0227">DNA damage</keyword>
<keyword id="KW-0228">DNA excision</keyword>
<keyword id="KW-0234">DNA repair</keyword>
<keyword id="KW-0267">Excision nuclease</keyword>
<keyword id="KW-0742">SOS response</keyword>
<feature type="chain" id="PRO_1000200609" description="UvrABC system protein C">
    <location>
        <begin position="1"/>
        <end position="610"/>
    </location>
</feature>
<feature type="domain" description="GIY-YIG" evidence="1">
    <location>
        <begin position="16"/>
        <end position="94"/>
    </location>
</feature>
<feature type="domain" description="UVR" evidence="1">
    <location>
        <begin position="204"/>
        <end position="239"/>
    </location>
</feature>
<comment type="function">
    <text evidence="1">The UvrABC repair system catalyzes the recognition and processing of DNA lesions. UvrC both incises the 5' and 3' sides of the lesion. The N-terminal half is responsible for the 3' incision and the C-terminal half is responsible for the 5' incision.</text>
</comment>
<comment type="subunit">
    <text evidence="1">Interacts with UvrB in an incision complex.</text>
</comment>
<comment type="subcellular location">
    <subcellularLocation>
        <location evidence="1">Cytoplasm</location>
    </subcellularLocation>
</comment>
<comment type="similarity">
    <text evidence="1">Belongs to the UvrC family.</text>
</comment>
<sequence>MSTQFDSAPFLKTVTNQPGVYRMYNAEAEVIYVGKAKDLKKRLTSYFRKNLDSEKTKALVSNIAKIDVTVTHTETEALILEHNYIKQYLPKYNVLLRDDKSYPYIFLSAHKHPRLSSHRGAKKRRGEYFGPYPDSGAVRETLHLIQKIFPVRQCEDTVYSNRTRPCLMYQIGRCAGPCVKGLISDQGYQEIVHYLRLFLQGKDNQVLSILVEKMEQASRELRFEDAAKARDQIQAIRRVQEQQFVSDDSLEDLDVLGFAQENGIACIHILMIRQGKVLGSRSHFPKIPSDTSQVEVFESFLSQYYLSHSEARSIPARIILNRGLTEETEALQIAISELAGRKVTFHVNPTGTRGRYLKLANTNALTAITTKMNHKMTISQRFKALQEELGMDAITRMECFDISHTMGESTMASCVVFNQEGPLKQEYRRYNITGITGGDDYAAMAQVLERRYSKQLDSSKIPDIIFIDGGKGQLNRAYEIISSCWQDWPKYPKIIGIAKGVTRKPGLETLITIDGDEFHLPSDAPALHLIQHIRDESHNHAIAGHRAQRGKTRRTSTLEGIEGVGPKRRQALLKYLGGMQELKRASVEEIAKVPGISHALAENIYQALKQ</sequence>
<reference key="1">
    <citation type="journal article" date="2008" name="PLoS ONE">
        <title>A recalibrated molecular clock and independent origins for the cholera pandemic clones.</title>
        <authorList>
            <person name="Feng L."/>
            <person name="Reeves P.R."/>
            <person name="Lan R."/>
            <person name="Ren Y."/>
            <person name="Gao C."/>
            <person name="Zhou Z."/>
            <person name="Ren Y."/>
            <person name="Cheng J."/>
            <person name="Wang W."/>
            <person name="Wang J."/>
            <person name="Qian W."/>
            <person name="Li D."/>
            <person name="Wang L."/>
        </authorList>
    </citation>
    <scope>NUCLEOTIDE SEQUENCE [LARGE SCALE GENOMIC DNA]</scope>
    <source>
        <strain>M66-2</strain>
    </source>
</reference>
<name>UVRC_VIBCM</name>
<protein>
    <recommendedName>
        <fullName evidence="1">UvrABC system protein C</fullName>
        <shortName evidence="1">Protein UvrC</shortName>
    </recommendedName>
    <alternativeName>
        <fullName evidence="1">Excinuclease ABC subunit C</fullName>
    </alternativeName>
</protein>
<dbReference type="EMBL" id="CP001233">
    <property type="protein sequence ID" value="ACP05486.1"/>
    <property type="molecule type" value="Genomic_DNA"/>
</dbReference>
<dbReference type="RefSeq" id="WP_000107095.1">
    <property type="nucleotide sequence ID" value="NC_012578.1"/>
</dbReference>
<dbReference type="SMR" id="C3LLR0"/>
<dbReference type="KEGG" id="vcm:VCM66_1169"/>
<dbReference type="HOGENOM" id="CLU_014841_3_0_6"/>
<dbReference type="Proteomes" id="UP000001217">
    <property type="component" value="Chromosome I"/>
</dbReference>
<dbReference type="GO" id="GO:0005737">
    <property type="term" value="C:cytoplasm"/>
    <property type="evidence" value="ECO:0007669"/>
    <property type="project" value="UniProtKB-SubCell"/>
</dbReference>
<dbReference type="GO" id="GO:0009380">
    <property type="term" value="C:excinuclease repair complex"/>
    <property type="evidence" value="ECO:0007669"/>
    <property type="project" value="InterPro"/>
</dbReference>
<dbReference type="GO" id="GO:0003677">
    <property type="term" value="F:DNA binding"/>
    <property type="evidence" value="ECO:0007669"/>
    <property type="project" value="UniProtKB-UniRule"/>
</dbReference>
<dbReference type="GO" id="GO:0009381">
    <property type="term" value="F:excinuclease ABC activity"/>
    <property type="evidence" value="ECO:0007669"/>
    <property type="project" value="UniProtKB-UniRule"/>
</dbReference>
<dbReference type="GO" id="GO:0006289">
    <property type="term" value="P:nucleotide-excision repair"/>
    <property type="evidence" value="ECO:0007669"/>
    <property type="project" value="UniProtKB-UniRule"/>
</dbReference>
<dbReference type="GO" id="GO:0009432">
    <property type="term" value="P:SOS response"/>
    <property type="evidence" value="ECO:0007669"/>
    <property type="project" value="UniProtKB-UniRule"/>
</dbReference>
<dbReference type="CDD" id="cd10434">
    <property type="entry name" value="GIY-YIG_UvrC_Cho"/>
    <property type="match status" value="1"/>
</dbReference>
<dbReference type="FunFam" id="1.10.150.20:FF:000005">
    <property type="entry name" value="UvrABC system protein C"/>
    <property type="match status" value="1"/>
</dbReference>
<dbReference type="FunFam" id="3.30.420.340:FF:000001">
    <property type="entry name" value="UvrABC system protein C"/>
    <property type="match status" value="1"/>
</dbReference>
<dbReference type="FunFam" id="3.40.1440.10:FF:000001">
    <property type="entry name" value="UvrABC system protein C"/>
    <property type="match status" value="1"/>
</dbReference>
<dbReference type="FunFam" id="4.10.860.10:FF:000002">
    <property type="entry name" value="UvrABC system protein C"/>
    <property type="match status" value="1"/>
</dbReference>
<dbReference type="Gene3D" id="1.10.150.20">
    <property type="entry name" value="5' to 3' exonuclease, C-terminal subdomain"/>
    <property type="match status" value="1"/>
</dbReference>
<dbReference type="Gene3D" id="3.40.1440.10">
    <property type="entry name" value="GIY-YIG endonuclease"/>
    <property type="match status" value="1"/>
</dbReference>
<dbReference type="Gene3D" id="4.10.860.10">
    <property type="entry name" value="UVR domain"/>
    <property type="match status" value="1"/>
</dbReference>
<dbReference type="Gene3D" id="3.30.420.340">
    <property type="entry name" value="UvrC, RNAse H endonuclease domain"/>
    <property type="match status" value="1"/>
</dbReference>
<dbReference type="HAMAP" id="MF_00203">
    <property type="entry name" value="UvrC"/>
    <property type="match status" value="1"/>
</dbReference>
<dbReference type="InterPro" id="IPR000305">
    <property type="entry name" value="GIY-YIG_endonuc"/>
</dbReference>
<dbReference type="InterPro" id="IPR035901">
    <property type="entry name" value="GIY-YIG_endonuc_sf"/>
</dbReference>
<dbReference type="InterPro" id="IPR047296">
    <property type="entry name" value="GIY-YIG_UvrC_Cho"/>
</dbReference>
<dbReference type="InterPro" id="IPR003583">
    <property type="entry name" value="Hlx-hairpin-Hlx_DNA-bd_motif"/>
</dbReference>
<dbReference type="InterPro" id="IPR010994">
    <property type="entry name" value="RuvA_2-like"/>
</dbReference>
<dbReference type="InterPro" id="IPR001943">
    <property type="entry name" value="UVR_dom"/>
</dbReference>
<dbReference type="InterPro" id="IPR036876">
    <property type="entry name" value="UVR_dom_sf"/>
</dbReference>
<dbReference type="InterPro" id="IPR050066">
    <property type="entry name" value="UvrABC_protein_C"/>
</dbReference>
<dbReference type="InterPro" id="IPR004791">
    <property type="entry name" value="UvrC"/>
</dbReference>
<dbReference type="InterPro" id="IPR001162">
    <property type="entry name" value="UvrC_RNase_H_dom"/>
</dbReference>
<dbReference type="InterPro" id="IPR038476">
    <property type="entry name" value="UvrC_RNase_H_dom_sf"/>
</dbReference>
<dbReference type="NCBIfam" id="NF001824">
    <property type="entry name" value="PRK00558.1-5"/>
    <property type="match status" value="1"/>
</dbReference>
<dbReference type="NCBIfam" id="TIGR00194">
    <property type="entry name" value="uvrC"/>
    <property type="match status" value="1"/>
</dbReference>
<dbReference type="PANTHER" id="PTHR30562:SF1">
    <property type="entry name" value="UVRABC SYSTEM PROTEIN C"/>
    <property type="match status" value="1"/>
</dbReference>
<dbReference type="PANTHER" id="PTHR30562">
    <property type="entry name" value="UVRC/OXIDOREDUCTASE"/>
    <property type="match status" value="1"/>
</dbReference>
<dbReference type="Pfam" id="PF01541">
    <property type="entry name" value="GIY-YIG"/>
    <property type="match status" value="1"/>
</dbReference>
<dbReference type="Pfam" id="PF14520">
    <property type="entry name" value="HHH_5"/>
    <property type="match status" value="1"/>
</dbReference>
<dbReference type="Pfam" id="PF02151">
    <property type="entry name" value="UVR"/>
    <property type="match status" value="1"/>
</dbReference>
<dbReference type="Pfam" id="PF22920">
    <property type="entry name" value="UvrC_RNaseH"/>
    <property type="match status" value="1"/>
</dbReference>
<dbReference type="Pfam" id="PF08459">
    <property type="entry name" value="UvrC_RNaseH_dom"/>
    <property type="match status" value="1"/>
</dbReference>
<dbReference type="SMART" id="SM00465">
    <property type="entry name" value="GIYc"/>
    <property type="match status" value="1"/>
</dbReference>
<dbReference type="SMART" id="SM00278">
    <property type="entry name" value="HhH1"/>
    <property type="match status" value="2"/>
</dbReference>
<dbReference type="SUPFAM" id="SSF46600">
    <property type="entry name" value="C-terminal UvrC-binding domain of UvrB"/>
    <property type="match status" value="1"/>
</dbReference>
<dbReference type="SUPFAM" id="SSF82771">
    <property type="entry name" value="GIY-YIG endonuclease"/>
    <property type="match status" value="1"/>
</dbReference>
<dbReference type="SUPFAM" id="SSF47781">
    <property type="entry name" value="RuvA domain 2-like"/>
    <property type="match status" value="1"/>
</dbReference>
<dbReference type="PROSITE" id="PS50164">
    <property type="entry name" value="GIY_YIG"/>
    <property type="match status" value="1"/>
</dbReference>
<dbReference type="PROSITE" id="PS50151">
    <property type="entry name" value="UVR"/>
    <property type="match status" value="1"/>
</dbReference>
<dbReference type="PROSITE" id="PS50165">
    <property type="entry name" value="UVRC"/>
    <property type="match status" value="1"/>
</dbReference>
<gene>
    <name evidence="1" type="primary">uvrC</name>
    <name type="ordered locus">VCM66_1169</name>
</gene>
<accession>C3LLR0</accession>
<evidence type="ECO:0000255" key="1">
    <source>
        <dbReference type="HAMAP-Rule" id="MF_00203"/>
    </source>
</evidence>
<proteinExistence type="inferred from homology"/>